<protein>
    <recommendedName>
        <fullName>Sulfur-rich protein</fullName>
    </recommendedName>
</protein>
<dbReference type="EMBL" id="M61116">
    <property type="protein sequence ID" value="AAB61620.1"/>
    <property type="status" value="ALT_FRAME"/>
    <property type="molecule type" value="Genomic_DNA"/>
</dbReference>
<dbReference type="EMBL" id="CP002549">
    <property type="protein sequence ID" value="ADZ18818.1"/>
    <property type="status" value="ALT_INIT"/>
    <property type="molecule type" value="Genomic_DNA"/>
</dbReference>
<dbReference type="EMBL" id="CP002586">
    <property type="protein sequence ID" value="AEB55214.1"/>
    <property type="molecule type" value="Genomic_DNA"/>
</dbReference>
<dbReference type="RefSeq" id="WP_013462605.1">
    <property type="nucleotide sequence ID" value="NC_017287.1"/>
</dbReference>
<dbReference type="SMR" id="P28164"/>
<dbReference type="GeneID" id="12242470"/>
<dbReference type="KEGG" id="chb:G5O_0211"/>
<dbReference type="KEGG" id="chp:CPSIT_0209"/>
<dbReference type="PATRIC" id="fig|331636.3.peg.197"/>
<dbReference type="HOGENOM" id="CLU_1902939_0_0_0"/>
<dbReference type="GO" id="GO:0019867">
    <property type="term" value="C:outer membrane"/>
    <property type="evidence" value="ECO:0007669"/>
    <property type="project" value="InterPro"/>
</dbReference>
<dbReference type="InterPro" id="IPR008436">
    <property type="entry name" value="CRPA"/>
</dbReference>
<dbReference type="Pfam" id="PF05745">
    <property type="entry name" value="CRPA"/>
    <property type="match status" value="1"/>
</dbReference>
<proteinExistence type="predicted"/>
<evidence type="ECO:0000255" key="1"/>
<evidence type="ECO:0000305" key="2"/>
<comment type="subcellular location">
    <subcellularLocation>
        <location evidence="2">Membrane</location>
        <topology evidence="2">Multi-pass membrane protein</topology>
    </subcellularLocation>
</comment>
<comment type="sequence caution" evidence="2">
    <conflict type="frameshift">
        <sequence resource="EMBL-CDS" id="AAB61620"/>
    </conflict>
</comment>
<comment type="sequence caution" evidence="2">
    <conflict type="erroneous initiation">
        <sequence resource="EMBL-CDS" id="ADZ18818"/>
    </conflict>
    <text>Truncated N-terminus.</text>
</comment>
<sequence>MSGENANSIGSDVTSLIQPGLEQVMQDEGVQVSLINSVLGWCRVHIINPIKTSKIVQSRAFQITMVVLGIILLIAGLALTFVLQGQLGKNAFLFLIPAVIGLVKLLATSVCMEKPCTPEKWRLCKRLLATTEDILDDGQINQSNTIFTMNSSESTSASAS</sequence>
<name>SRP_CHLP6</name>
<reference key="1">
    <citation type="journal article" date="1991" name="J. Bacteriol.">
        <title>Sequence analysis and lipid modification of the cysteine-rich envelope proteins of Chlamydia psittaci 6BC.</title>
        <authorList>
            <person name="Everett K.D.E."/>
            <person name="Hatch T.P."/>
        </authorList>
    </citation>
    <scope>NUCLEOTIDE SEQUENCE [GENOMIC DNA]</scope>
    <source>
        <strain>ATCC VR-125 / 6BC</strain>
    </source>
</reference>
<reference key="2">
    <citation type="journal article" date="2011" name="J. Bacteriol.">
        <title>Full-length de novo sequence of the Chlamydophila psittaci type strain, 6BC.</title>
        <authorList>
            <person name="Voigt A."/>
            <person name="Schofl G."/>
            <person name="Heidrich A."/>
            <person name="Sachse K."/>
            <person name="Saluz H.P."/>
        </authorList>
    </citation>
    <scope>NUCLEOTIDE SEQUENCE [LARGE SCALE GENOMIC DNA]</scope>
    <source>
        <strain>ATCC VR-125 / 6BC</strain>
    </source>
</reference>
<reference key="3">
    <citation type="journal article" date="2011" name="J. Bacteriol.">
        <title>Genome sequences of the zoonotic pathogens Chlamydia psittaci 6BC and Cal10.</title>
        <authorList>
            <person name="Grinblat-Huse V."/>
            <person name="Drabek E.F."/>
            <person name="Creasy H.H."/>
            <person name="Daugherty S.C."/>
            <person name="Jones K.M."/>
            <person name="Santana-Cruz I."/>
            <person name="Tallon L.J."/>
            <person name="Read T.D."/>
            <person name="Hatch T.P."/>
            <person name="Bavoil P."/>
            <person name="Myers G.S."/>
        </authorList>
    </citation>
    <scope>NUCLEOTIDE SEQUENCE [LARGE SCALE GENOMIC DNA]</scope>
    <source>
        <strain>ATCC VR-125 / 6BC</strain>
    </source>
</reference>
<organism>
    <name type="scientific">Chlamydophila psittaci (strain ATCC VR-125 / 6BC)</name>
    <name type="common">Chlamydia psittaci</name>
    <dbReference type="NCBI Taxonomy" id="331636"/>
    <lineage>
        <taxon>Bacteria</taxon>
        <taxon>Pseudomonadati</taxon>
        <taxon>Chlamydiota</taxon>
        <taxon>Chlamydiia</taxon>
        <taxon>Chlamydiales</taxon>
        <taxon>Chlamydiaceae</taxon>
        <taxon>Chlamydia/Chlamydophila group</taxon>
        <taxon>Chlamydia</taxon>
    </lineage>
</organism>
<feature type="chain" id="PRO_0000072195" description="Sulfur-rich protein">
    <location>
        <begin position="1"/>
        <end position="160"/>
    </location>
</feature>
<feature type="transmembrane region" description="Helical" evidence="1">
    <location>
        <begin position="63"/>
        <end position="83"/>
    </location>
</feature>
<feature type="transmembrane region" description="Helical" evidence="1">
    <location>
        <begin position="92"/>
        <end position="112"/>
    </location>
</feature>
<feature type="sequence conflict" description="In Ref. 1; AAB61620." evidence="2" ref="1">
    <original>A</original>
    <variation>R</variation>
    <location>
        <position position="159"/>
    </location>
</feature>
<accession>P28164</accession>
<accession>F0T378</accession>
<accession>F4CI01</accession>
<gene>
    <name type="primary">srp</name>
    <name type="ordered locus">CPSIT_0209</name>
    <name type="ordered locus">G5O_0211</name>
</gene>
<keyword id="KW-0472">Membrane</keyword>
<keyword id="KW-0812">Transmembrane</keyword>
<keyword id="KW-1133">Transmembrane helix</keyword>